<sequence>MKAKTLIDAYEAFCPLDLSMEGDVKGLQMGSLDKDIRKVMITLDIRESTVAEAIKNEVDLIITKHAPIFKPLKDLVSSPQRDILLDLVKHDISVYVSHTNIDIVPGGLNDWFCDLLEIKEATYLSETKEGFGIGRIGTVKEQALEELASKVKRVFDLDTVRLIRYDKENPLISKIAICGGSGGEFYQDAVQKGADVYITGDIYYHTAQEMLTEGLFAVDPGHHIEVLFTEKLKEKLQGWKEENGWDVSIISSKASTNPFSHL</sequence>
<gene>
    <name type="ordered locus">SPs1208</name>
</gene>
<accession>P0DG85</accession>
<accession>P67275</accession>
<accession>Q9A049</accession>
<organism>
    <name type="scientific">Streptococcus pyogenes serotype M3 (strain SSI-1)</name>
    <dbReference type="NCBI Taxonomy" id="193567"/>
    <lineage>
        <taxon>Bacteria</taxon>
        <taxon>Bacillati</taxon>
        <taxon>Bacillota</taxon>
        <taxon>Bacilli</taxon>
        <taxon>Lactobacillales</taxon>
        <taxon>Streptococcaceae</taxon>
        <taxon>Streptococcus</taxon>
    </lineage>
</organism>
<name>GCH1L_STRPQ</name>
<dbReference type="EMBL" id="BA000034">
    <property type="protein sequence ID" value="BAC64303.1"/>
    <property type="molecule type" value="Genomic_DNA"/>
</dbReference>
<dbReference type="RefSeq" id="WP_002984887.1">
    <property type="nucleotide sequence ID" value="NC_004606.1"/>
</dbReference>
<dbReference type="SMR" id="P0DG85"/>
<dbReference type="KEGG" id="sps:SPs1208"/>
<dbReference type="HOGENOM" id="CLU_037423_2_0_9"/>
<dbReference type="GO" id="GO:0005737">
    <property type="term" value="C:cytoplasm"/>
    <property type="evidence" value="ECO:0007669"/>
    <property type="project" value="TreeGrafter"/>
</dbReference>
<dbReference type="GO" id="GO:0046872">
    <property type="term" value="F:metal ion binding"/>
    <property type="evidence" value="ECO:0007669"/>
    <property type="project" value="UniProtKB-KW"/>
</dbReference>
<dbReference type="FunFam" id="3.40.1390.30:FF:000006">
    <property type="entry name" value="Dinuclear metal center protein, YbgI family"/>
    <property type="match status" value="1"/>
</dbReference>
<dbReference type="Gene3D" id="3.40.1390.30">
    <property type="entry name" value="NIF3 (NGG1p interacting factor 3)-like"/>
    <property type="match status" value="2"/>
</dbReference>
<dbReference type="InterPro" id="IPR002678">
    <property type="entry name" value="DUF34/NIF3"/>
</dbReference>
<dbReference type="InterPro" id="IPR036069">
    <property type="entry name" value="DUF34/NIF3_sf"/>
</dbReference>
<dbReference type="NCBIfam" id="TIGR00486">
    <property type="entry name" value="YbgI_SA1388"/>
    <property type="match status" value="1"/>
</dbReference>
<dbReference type="PANTHER" id="PTHR13799:SF14">
    <property type="entry name" value="GTP CYCLOHYDROLASE 1 TYPE 2 HOMOLOG"/>
    <property type="match status" value="1"/>
</dbReference>
<dbReference type="PANTHER" id="PTHR13799">
    <property type="entry name" value="NGG1 INTERACTING FACTOR 3"/>
    <property type="match status" value="1"/>
</dbReference>
<dbReference type="Pfam" id="PF01784">
    <property type="entry name" value="DUF34_NIF3"/>
    <property type="match status" value="1"/>
</dbReference>
<dbReference type="SUPFAM" id="SSF102705">
    <property type="entry name" value="NIF3 (NGG1p interacting factor 3)-like"/>
    <property type="match status" value="1"/>
</dbReference>
<protein>
    <recommendedName>
        <fullName>GTP cyclohydrolase 1 type 2 homolog</fullName>
    </recommendedName>
</protein>
<evidence type="ECO:0000250" key="1">
    <source>
        <dbReference type="UniProtKB" id="P0AFP6"/>
    </source>
</evidence>
<evidence type="ECO:0000305" key="2"/>
<comment type="subunit">
    <text evidence="1">Homohexamer.</text>
</comment>
<comment type="similarity">
    <text evidence="2">Belongs to the GTP cyclohydrolase I type 2/NIF3 family.</text>
</comment>
<keyword id="KW-0479">Metal-binding</keyword>
<reference key="1">
    <citation type="journal article" date="2003" name="Genome Res.">
        <title>Genome sequence of an M3 strain of Streptococcus pyogenes reveals a large-scale genomic rearrangement in invasive strains and new insights into phage evolution.</title>
        <authorList>
            <person name="Nakagawa I."/>
            <person name="Kurokawa K."/>
            <person name="Yamashita A."/>
            <person name="Nakata M."/>
            <person name="Tomiyasu Y."/>
            <person name="Okahashi N."/>
            <person name="Kawabata S."/>
            <person name="Yamazaki K."/>
            <person name="Shiba T."/>
            <person name="Yasunaga T."/>
            <person name="Hayashi H."/>
            <person name="Hattori M."/>
            <person name="Hamada S."/>
        </authorList>
    </citation>
    <scope>NUCLEOTIDE SEQUENCE [LARGE SCALE GENOMIC DNA]</scope>
    <source>
        <strain>SSI-1</strain>
    </source>
</reference>
<feature type="chain" id="PRO_0000411632" description="GTP cyclohydrolase 1 type 2 homolog">
    <location>
        <begin position="1"/>
        <end position="262"/>
    </location>
</feature>
<feature type="binding site" evidence="1">
    <location>
        <position position="65"/>
    </location>
    <ligand>
        <name>a divalent metal cation</name>
        <dbReference type="ChEBI" id="CHEBI:60240"/>
        <label>2</label>
    </ligand>
</feature>
<feature type="binding site" evidence="1">
    <location>
        <position position="102"/>
    </location>
    <ligand>
        <name>a divalent metal cation</name>
        <dbReference type="ChEBI" id="CHEBI:60240"/>
        <label>1</label>
    </ligand>
</feature>
<feature type="binding site" evidence="1">
    <location>
        <position position="222"/>
    </location>
    <ligand>
        <name>a divalent metal cation</name>
        <dbReference type="ChEBI" id="CHEBI:60240"/>
        <label>2</label>
    </ligand>
</feature>
<feature type="binding site" evidence="1">
    <location>
        <position position="225"/>
    </location>
    <ligand>
        <name>a divalent metal cation</name>
        <dbReference type="ChEBI" id="CHEBI:60240"/>
        <label>1</label>
    </ligand>
</feature>
<feature type="binding site" evidence="1">
    <location>
        <position position="225"/>
    </location>
    <ligand>
        <name>a divalent metal cation</name>
        <dbReference type="ChEBI" id="CHEBI:60240"/>
        <label>2</label>
    </ligand>
</feature>
<proteinExistence type="inferred from homology"/>